<comment type="function">
    <text evidence="1">May help in the organization of the PsaE and PsaF subunits.</text>
</comment>
<comment type="subcellular location">
    <subcellularLocation>
        <location evidence="1">Plastid</location>
        <location evidence="1">Chloroplast thylakoid membrane</location>
        <topology evidence="1">Single-pass membrane protein</topology>
    </subcellularLocation>
</comment>
<comment type="similarity">
    <text evidence="1">Belongs to the PsaJ family.</text>
</comment>
<organism>
    <name type="scientific">Vitis vinifera</name>
    <name type="common">Grape</name>
    <dbReference type="NCBI Taxonomy" id="29760"/>
    <lineage>
        <taxon>Eukaryota</taxon>
        <taxon>Viridiplantae</taxon>
        <taxon>Streptophyta</taxon>
        <taxon>Embryophyta</taxon>
        <taxon>Tracheophyta</taxon>
        <taxon>Spermatophyta</taxon>
        <taxon>Magnoliopsida</taxon>
        <taxon>eudicotyledons</taxon>
        <taxon>Gunneridae</taxon>
        <taxon>Pentapetalae</taxon>
        <taxon>rosids</taxon>
        <taxon>Vitales</taxon>
        <taxon>Vitaceae</taxon>
        <taxon>Viteae</taxon>
        <taxon>Vitis</taxon>
    </lineage>
</organism>
<protein>
    <recommendedName>
        <fullName evidence="1">Photosystem I reaction center subunit IX</fullName>
    </recommendedName>
    <alternativeName>
        <fullName evidence="1">PSI-J</fullName>
    </alternativeName>
</protein>
<reference key="1">
    <citation type="journal article" date="2006" name="BMC Evol. Biol.">
        <title>Phylogenetic analyses of Vitis (Vitaceae) based on complete chloroplast genome sequences: effects of taxon sampling and phylogenetic methods on resolving relationships among rosids.</title>
        <authorList>
            <person name="Jansen R.K."/>
            <person name="Kaittanis C."/>
            <person name="Lee S.-B."/>
            <person name="Saski C."/>
            <person name="Tomkins J."/>
            <person name="Alverson A.J."/>
            <person name="Daniell H."/>
        </authorList>
    </citation>
    <scope>NUCLEOTIDE SEQUENCE [LARGE SCALE GENOMIC DNA]</scope>
    <source>
        <strain>cv. Maxxa</strain>
    </source>
</reference>
<keyword id="KW-0150">Chloroplast</keyword>
<keyword id="KW-0472">Membrane</keyword>
<keyword id="KW-0602">Photosynthesis</keyword>
<keyword id="KW-0603">Photosystem I</keyword>
<keyword id="KW-0934">Plastid</keyword>
<keyword id="KW-1185">Reference proteome</keyword>
<keyword id="KW-0793">Thylakoid</keyword>
<keyword id="KW-0812">Transmembrane</keyword>
<keyword id="KW-1133">Transmembrane helix</keyword>
<sequence length="43" mass="4891">MRDLKTYLSTAPVLSTIWFGSLAGLLIEINRLFPDALTFPFFN</sequence>
<dbReference type="EMBL" id="DQ424856">
    <property type="protein sequence ID" value="ABE47554.1"/>
    <property type="molecule type" value="Genomic_DNA"/>
</dbReference>
<dbReference type="RefSeq" id="YP_002608389.1">
    <property type="nucleotide sequence ID" value="NC_012119.1"/>
</dbReference>
<dbReference type="RefSeq" id="YP_567096.1">
    <property type="nucleotide sequence ID" value="NC_007957.1"/>
</dbReference>
<dbReference type="SMR" id="Q0ZJ00"/>
<dbReference type="FunCoup" id="Q0ZJ00">
    <property type="interactions" value="46"/>
</dbReference>
<dbReference type="STRING" id="29760.Q0ZJ00"/>
<dbReference type="GeneID" id="4025059"/>
<dbReference type="GeneID" id="7498607"/>
<dbReference type="KEGG" id="vvi:4025059"/>
<dbReference type="KEGG" id="vvi:7498607"/>
<dbReference type="InParanoid" id="Q0ZJ00"/>
<dbReference type="OrthoDB" id="667171at71240"/>
<dbReference type="Proteomes" id="UP000009183">
    <property type="component" value="Chloroplast"/>
</dbReference>
<dbReference type="GO" id="GO:0009535">
    <property type="term" value="C:chloroplast thylakoid membrane"/>
    <property type="evidence" value="ECO:0007669"/>
    <property type="project" value="UniProtKB-SubCell"/>
</dbReference>
<dbReference type="GO" id="GO:0009522">
    <property type="term" value="C:photosystem I"/>
    <property type="evidence" value="ECO:0007669"/>
    <property type="project" value="UniProtKB-KW"/>
</dbReference>
<dbReference type="GO" id="GO:0015979">
    <property type="term" value="P:photosynthesis"/>
    <property type="evidence" value="ECO:0007669"/>
    <property type="project" value="UniProtKB-UniRule"/>
</dbReference>
<dbReference type="FunFam" id="1.20.5.510:FF:000001">
    <property type="entry name" value="Photosystem I reaction center subunit IX"/>
    <property type="match status" value="1"/>
</dbReference>
<dbReference type="Gene3D" id="1.20.5.510">
    <property type="entry name" value="Single helix bin"/>
    <property type="match status" value="1"/>
</dbReference>
<dbReference type="HAMAP" id="MF_00522">
    <property type="entry name" value="PSI_PsaJ"/>
    <property type="match status" value="1"/>
</dbReference>
<dbReference type="InterPro" id="IPR002615">
    <property type="entry name" value="PSI_PsaJ"/>
</dbReference>
<dbReference type="InterPro" id="IPR036062">
    <property type="entry name" value="PSI_PsaJ_sf"/>
</dbReference>
<dbReference type="PANTHER" id="PTHR36082">
    <property type="match status" value="1"/>
</dbReference>
<dbReference type="PANTHER" id="PTHR36082:SF2">
    <property type="entry name" value="PHOTOSYSTEM I REACTION CENTER SUBUNIT IX"/>
    <property type="match status" value="1"/>
</dbReference>
<dbReference type="Pfam" id="PF01701">
    <property type="entry name" value="PSI_PsaJ"/>
    <property type="match status" value="1"/>
</dbReference>
<dbReference type="SUPFAM" id="SSF81544">
    <property type="entry name" value="Subunit IX of photosystem I reaction centre, PsaJ"/>
    <property type="match status" value="1"/>
</dbReference>
<accession>Q0ZJ00</accession>
<name>PSAJ_VITVI</name>
<gene>
    <name evidence="1" type="primary">psaJ</name>
</gene>
<evidence type="ECO:0000255" key="1">
    <source>
        <dbReference type="HAMAP-Rule" id="MF_00522"/>
    </source>
</evidence>
<feature type="chain" id="PRO_0000276081" description="Photosystem I reaction center subunit IX">
    <location>
        <begin position="1"/>
        <end position="43"/>
    </location>
</feature>
<feature type="transmembrane region" description="Helical" evidence="1">
    <location>
        <begin position="7"/>
        <end position="27"/>
    </location>
</feature>
<geneLocation type="chloroplast"/>
<proteinExistence type="inferred from homology"/>